<accession>P0DP33</accession>
<accession>P02593</accession>
<accession>P0DP40</accession>
<accession>P62155</accession>
<accession>P70667</accession>
<accession>P99014</accession>
<accession>Q61379</accession>
<accession>Q61380</accession>
<accession>Q6INP3</accession>
<proteinExistence type="evidence at protein level"/>
<gene>
    <name evidence="1" type="primary">calm1</name>
</gene>
<reference key="1">
    <citation type="submission" date="2005-04" db="EMBL/GenBank/DDBJ databases">
        <authorList>
            <consortium name="NIH - Xenopus Gene Collection (XGC) project"/>
        </authorList>
    </citation>
    <scope>NUCLEOTIDE SEQUENCE [LARGE SCALE MRNA]</scope>
    <source>
        <tissue>Embryo</tissue>
        <tissue>Kidney</tissue>
    </source>
</reference>
<reference key="2">
    <citation type="journal article" date="1995" name="Nat. Struct. Biol.">
        <title>Solution structure of calcium-free calmodulin.</title>
        <authorList>
            <person name="Kuboniwa H."/>
            <person name="Tjandra N."/>
            <person name="Grzesiek S."/>
            <person name="Ren H."/>
            <person name="Klee C.B."/>
            <person name="Bax A."/>
        </authorList>
    </citation>
    <scope>STRUCTURE BY NMR</scope>
</reference>
<reference key="3">
    <citation type="journal article" date="1995" name="Nat. Struct. Biol.">
        <title>Calcium-induced conformational transition revealed by the solution structure of apo calmodulin.</title>
        <authorList>
            <person name="Zhang M."/>
            <person name="Tanaka T."/>
            <person name="Ikura M."/>
        </authorList>
    </citation>
    <scope>STRUCTURE BY NMR</scope>
</reference>
<reference key="4">
    <citation type="journal article" date="1998" name="J. Mol. Biol.">
        <title>Solution structure of calmodulin-W-7 complex: the basis of diversity in molecular recognition.</title>
        <authorList>
            <person name="Osawa M."/>
            <person name="Swindells M.B."/>
            <person name="Tanikawa J."/>
            <person name="Tanaka T."/>
            <person name="Mase T."/>
            <person name="Furuya T."/>
            <person name="Ikura M."/>
        </authorList>
    </citation>
    <scope>STRUCTURE BY NMR</scope>
</reference>
<reference key="5">
    <citation type="journal article" date="1999" name="Biochemistry">
        <title>NMR solution structure of a complex of calmodulin with a binding peptide of the Ca(2+) pump.</title>
        <authorList>
            <person name="Elshorst B."/>
            <person name="Hennig M."/>
            <person name="Foersterling H."/>
            <person name="Diener A."/>
            <person name="Maurer M."/>
            <person name="Schulte P."/>
            <person name="Schwalbe H."/>
            <person name="Griesinger C."/>
            <person name="Krebs J."/>
            <person name="Schmid H."/>
            <person name="Vorherr T.E."/>
            <person name="Carafoli E."/>
        </authorList>
    </citation>
    <scope>STRUCTURE BY NMR</scope>
</reference>
<reference key="6">
    <citation type="journal article" date="1999" name="Nat. Struct. Biol.">
        <title>A novel target recognition revealed by calmodulin in complex with Ca2+-calmodulin-dependent kinase kinase.</title>
        <authorList>
            <person name="Osawa M."/>
            <person name="Tokumitsu H."/>
            <person name="Swindells M.B."/>
            <person name="Kurihara H."/>
            <person name="Orita M."/>
            <person name="Shibanuma T."/>
            <person name="Furuya T."/>
            <person name="Ikura M."/>
        </authorList>
    </citation>
    <scope>STRUCTURE BY NMR</scope>
</reference>
<reference key="7">
    <citation type="journal article" date="2000" name="J. Biomol. NMR">
        <title>Study of conformational rearrangement and refinement of structural homology models by the use of heteronuclear dipolar couplings.</title>
        <authorList>
            <person name="Chou J.J."/>
            <person name="Li S."/>
            <person name="Bax A."/>
        </authorList>
    </citation>
    <scope>STRUCTURE BY NMR OF 1-77 AND 83-149</scope>
</reference>
<reference key="8">
    <citation type="journal article" date="2003" name="J. Mol. Biol.">
        <title>Structural basis for simultaneous binding of two carboxy-terminal peptides of plant glutamate decarboxylase to calmodulin.</title>
        <authorList>
            <person name="Yap K.L."/>
            <person name="Yuan T."/>
            <person name="Mal T.K."/>
            <person name="Vogel H.J."/>
            <person name="Ikura M."/>
        </authorList>
    </citation>
    <scope>STRUCTURE BY NMR</scope>
</reference>
<reference key="9">
    <citation type="submission" date="2008-04" db="PDB data bank">
        <title>Solution structure of magnesium-bound form of calmodulin C-domain E104D/E140D Mutant.</title>
        <authorList>
            <consortium name="RIKEN structural genomics initiative (RSGI)"/>
        </authorList>
    </citation>
    <scope>STRUCTURE BY NMR OF 79-149</scope>
</reference>
<name>CALM1_XENLA</name>
<feature type="initiator methionine" description="Removed" evidence="1">
    <location>
        <position position="1"/>
    </location>
</feature>
<feature type="chain" id="PRO_0000439944" description="Calmodulin-1">
    <location>
        <begin position="2"/>
        <end position="149"/>
    </location>
</feature>
<feature type="domain" description="EF-hand 1" evidence="2">
    <location>
        <begin position="8"/>
        <end position="43"/>
    </location>
</feature>
<feature type="domain" description="EF-hand 2" evidence="2">
    <location>
        <begin position="44"/>
        <end position="79"/>
    </location>
</feature>
<feature type="domain" description="EF-hand 3" evidence="2">
    <location>
        <begin position="81"/>
        <end position="116"/>
    </location>
</feature>
<feature type="domain" description="EF-hand 4" evidence="2">
    <location>
        <begin position="117"/>
        <end position="149"/>
    </location>
</feature>
<feature type="binding site" evidence="2">
    <location>
        <position position="21"/>
    </location>
    <ligand>
        <name>Ca(2+)</name>
        <dbReference type="ChEBI" id="CHEBI:29108"/>
        <label>1</label>
    </ligand>
</feature>
<feature type="binding site" evidence="2">
    <location>
        <position position="23"/>
    </location>
    <ligand>
        <name>Ca(2+)</name>
        <dbReference type="ChEBI" id="CHEBI:29108"/>
        <label>1</label>
    </ligand>
</feature>
<feature type="binding site" evidence="2">
    <location>
        <position position="25"/>
    </location>
    <ligand>
        <name>Ca(2+)</name>
        <dbReference type="ChEBI" id="CHEBI:29108"/>
        <label>1</label>
    </ligand>
</feature>
<feature type="binding site" evidence="2">
    <location>
        <position position="27"/>
    </location>
    <ligand>
        <name>Ca(2+)</name>
        <dbReference type="ChEBI" id="CHEBI:29108"/>
        <label>1</label>
    </ligand>
</feature>
<feature type="binding site" evidence="2">
    <location>
        <position position="32"/>
    </location>
    <ligand>
        <name>Ca(2+)</name>
        <dbReference type="ChEBI" id="CHEBI:29108"/>
        <label>1</label>
    </ligand>
</feature>
<feature type="binding site" evidence="2">
    <location>
        <position position="57"/>
    </location>
    <ligand>
        <name>Ca(2+)</name>
        <dbReference type="ChEBI" id="CHEBI:29108"/>
        <label>2</label>
    </ligand>
</feature>
<feature type="binding site" evidence="2">
    <location>
        <position position="59"/>
    </location>
    <ligand>
        <name>Ca(2+)</name>
        <dbReference type="ChEBI" id="CHEBI:29108"/>
        <label>2</label>
    </ligand>
</feature>
<feature type="binding site" evidence="2">
    <location>
        <position position="61"/>
    </location>
    <ligand>
        <name>Ca(2+)</name>
        <dbReference type="ChEBI" id="CHEBI:29108"/>
        <label>2</label>
    </ligand>
</feature>
<feature type="binding site" evidence="2">
    <location>
        <position position="63"/>
    </location>
    <ligand>
        <name>Ca(2+)</name>
        <dbReference type="ChEBI" id="CHEBI:29108"/>
        <label>2</label>
    </ligand>
</feature>
<feature type="binding site" evidence="2">
    <location>
        <position position="68"/>
    </location>
    <ligand>
        <name>Ca(2+)</name>
        <dbReference type="ChEBI" id="CHEBI:29108"/>
        <label>2</label>
    </ligand>
</feature>
<feature type="binding site" evidence="2">
    <location>
        <position position="94"/>
    </location>
    <ligand>
        <name>Ca(2+)</name>
        <dbReference type="ChEBI" id="CHEBI:29108"/>
        <label>3</label>
    </ligand>
</feature>
<feature type="binding site" evidence="2">
    <location>
        <position position="96"/>
    </location>
    <ligand>
        <name>Ca(2+)</name>
        <dbReference type="ChEBI" id="CHEBI:29108"/>
        <label>3</label>
    </ligand>
</feature>
<feature type="binding site" evidence="2">
    <location>
        <position position="98"/>
    </location>
    <ligand>
        <name>Ca(2+)</name>
        <dbReference type="ChEBI" id="CHEBI:29108"/>
        <label>3</label>
    </ligand>
</feature>
<feature type="binding site" evidence="2">
    <location>
        <position position="100"/>
    </location>
    <ligand>
        <name>Ca(2+)</name>
        <dbReference type="ChEBI" id="CHEBI:29108"/>
        <label>3</label>
    </ligand>
</feature>
<feature type="binding site" evidence="2">
    <location>
        <position position="105"/>
    </location>
    <ligand>
        <name>Ca(2+)</name>
        <dbReference type="ChEBI" id="CHEBI:29108"/>
        <label>3</label>
    </ligand>
</feature>
<feature type="binding site" evidence="2">
    <location>
        <position position="130"/>
    </location>
    <ligand>
        <name>Ca(2+)</name>
        <dbReference type="ChEBI" id="CHEBI:29108"/>
        <label>4</label>
    </ligand>
</feature>
<feature type="binding site" evidence="2">
    <location>
        <position position="132"/>
    </location>
    <ligand>
        <name>Ca(2+)</name>
        <dbReference type="ChEBI" id="CHEBI:29108"/>
        <label>4</label>
    </ligand>
</feature>
<feature type="binding site" evidence="2">
    <location>
        <position position="134"/>
    </location>
    <ligand>
        <name>Ca(2+)</name>
        <dbReference type="ChEBI" id="CHEBI:29108"/>
        <label>4</label>
    </ligand>
</feature>
<feature type="binding site" evidence="2">
    <location>
        <position position="136"/>
    </location>
    <ligand>
        <name>Ca(2+)</name>
        <dbReference type="ChEBI" id="CHEBI:29108"/>
        <label>4</label>
    </ligand>
</feature>
<feature type="binding site" evidence="2">
    <location>
        <position position="141"/>
    </location>
    <ligand>
        <name>Ca(2+)</name>
        <dbReference type="ChEBI" id="CHEBI:29108"/>
        <label>4</label>
    </ligand>
</feature>
<feature type="modified residue" description="N-acetylalanine" evidence="1">
    <location>
        <position position="2"/>
    </location>
</feature>
<feature type="modified residue" description="N6,N6,N6-trimethyllysine" evidence="1">
    <location>
        <position position="116"/>
    </location>
</feature>
<feature type="helix" evidence="6">
    <location>
        <begin position="7"/>
        <end position="20"/>
    </location>
</feature>
<feature type="strand" evidence="8">
    <location>
        <begin position="22"/>
        <end position="24"/>
    </location>
</feature>
<feature type="strand" evidence="6">
    <location>
        <begin position="25"/>
        <end position="28"/>
    </location>
</feature>
<feature type="helix" evidence="6">
    <location>
        <begin position="30"/>
        <end position="39"/>
    </location>
</feature>
<feature type="helix" evidence="6">
    <location>
        <begin position="46"/>
        <end position="56"/>
    </location>
</feature>
<feature type="strand" evidence="5">
    <location>
        <begin position="58"/>
        <end position="60"/>
    </location>
</feature>
<feature type="strand" evidence="6">
    <location>
        <begin position="61"/>
        <end position="65"/>
    </location>
</feature>
<feature type="helix" evidence="6">
    <location>
        <begin position="66"/>
        <end position="76"/>
    </location>
</feature>
<feature type="strand" evidence="7">
    <location>
        <begin position="77"/>
        <end position="81"/>
    </location>
</feature>
<feature type="helix" evidence="6">
    <location>
        <begin position="84"/>
        <end position="93"/>
    </location>
</feature>
<feature type="turn" evidence="4">
    <location>
        <begin position="95"/>
        <end position="97"/>
    </location>
</feature>
<feature type="strand" evidence="6">
    <location>
        <begin position="98"/>
        <end position="101"/>
    </location>
</feature>
<feature type="helix" evidence="6">
    <location>
        <begin position="103"/>
        <end position="112"/>
    </location>
</feature>
<feature type="strand" evidence="9">
    <location>
        <begin position="113"/>
        <end position="115"/>
    </location>
</feature>
<feature type="helix" evidence="6">
    <location>
        <begin position="119"/>
        <end position="129"/>
    </location>
</feature>
<feature type="strand" evidence="6">
    <location>
        <begin position="134"/>
        <end position="138"/>
    </location>
</feature>
<feature type="helix" evidence="6">
    <location>
        <begin position="139"/>
        <end position="146"/>
    </location>
</feature>
<protein>
    <recommendedName>
        <fullName evidence="1">Calmodulin-1</fullName>
    </recommendedName>
</protein>
<keyword id="KW-0002">3D-structure</keyword>
<keyword id="KW-0007">Acetylation</keyword>
<keyword id="KW-0106">Calcium</keyword>
<keyword id="KW-0479">Metal-binding</keyword>
<keyword id="KW-0488">Methylation</keyword>
<keyword id="KW-1185">Reference proteome</keyword>
<keyword id="KW-0677">Repeat</keyword>
<comment type="function">
    <text evidence="1">Calmodulin acts as part of a calcium signal transduction pathway by mediating the control of a large number of enzymes, ion channels, aquaporins and other proteins through calcium-binding. Calcium-binding is required for the activation of calmodulin. Among the enzymes to be stimulated by the calmodulin-calcium complex are a number of protein kinases, such as myosin light-chain kinases and calmodulin-dependent protein kinase type II (CaMK2), and phosphatases.</text>
</comment>
<comment type="miscellaneous">
    <text>This protein has four functional calcium-binding sites.</text>
</comment>
<comment type="similarity">
    <text evidence="3">Belongs to the calmodulin family.</text>
</comment>
<sequence length="149" mass="16838">MADQLTEEQIAEFKEAFSLFDKDGDGTITTKELGTVMRSLGQNPTEAELQDMINEVDADGNGTIDFPEFLTMMARKMKDTDSEEEIREAFRVFDKDGNGYISAAELRHVMTNLGEKLTDEEVDEMIREADIDGDGQVNYEEFVQMMTAK</sequence>
<evidence type="ECO:0000250" key="1">
    <source>
        <dbReference type="UniProtKB" id="P0DP23"/>
    </source>
</evidence>
<evidence type="ECO:0000255" key="2">
    <source>
        <dbReference type="PROSITE-ProRule" id="PRU00448"/>
    </source>
</evidence>
<evidence type="ECO:0000305" key="3"/>
<evidence type="ECO:0007829" key="4">
    <source>
        <dbReference type="PDB" id="1CFF"/>
    </source>
</evidence>
<evidence type="ECO:0007829" key="5">
    <source>
        <dbReference type="PDB" id="1F70"/>
    </source>
</evidence>
<evidence type="ECO:0007829" key="6">
    <source>
        <dbReference type="PDB" id="1IQ5"/>
    </source>
</evidence>
<evidence type="ECO:0007829" key="7">
    <source>
        <dbReference type="PDB" id="1NWD"/>
    </source>
</evidence>
<evidence type="ECO:0007829" key="8">
    <source>
        <dbReference type="PDB" id="2LLO"/>
    </source>
</evidence>
<evidence type="ECO:0007829" key="9">
    <source>
        <dbReference type="PDB" id="5T0X"/>
    </source>
</evidence>
<dbReference type="EMBL" id="BC094079">
    <property type="protein sequence ID" value="AAH94079.1"/>
    <property type="molecule type" value="mRNA"/>
</dbReference>
<dbReference type="PIR" id="I51402">
    <property type="entry name" value="I51402"/>
</dbReference>
<dbReference type="RefSeq" id="NP_001080864.1">
    <property type="nucleotide sequence ID" value="NM_001087395.1"/>
</dbReference>
<dbReference type="RefSeq" id="NP_001084025.1">
    <property type="nucleotide sequence ID" value="NM_001090556.1"/>
</dbReference>
<dbReference type="RefSeq" id="NP_001089059.1">
    <property type="nucleotide sequence ID" value="NM_001095590.1"/>
</dbReference>
<dbReference type="PDB" id="1CFC">
    <property type="method" value="NMR"/>
    <property type="chains" value="A=2-149"/>
</dbReference>
<dbReference type="PDB" id="1CFD">
    <property type="method" value="NMR"/>
    <property type="chains" value="A=2-149"/>
</dbReference>
<dbReference type="PDB" id="1CFF">
    <property type="method" value="NMR"/>
    <property type="chains" value="A=2-149"/>
</dbReference>
<dbReference type="PDB" id="1CKK">
    <property type="method" value="NMR"/>
    <property type="chains" value="A=2-149"/>
</dbReference>
<dbReference type="PDB" id="1DMO">
    <property type="method" value="NMR"/>
    <property type="chains" value="A=2-149"/>
</dbReference>
<dbReference type="PDB" id="1F70">
    <property type="method" value="NMR"/>
    <property type="chains" value="A=2-77"/>
</dbReference>
<dbReference type="PDB" id="1F71">
    <property type="method" value="NMR"/>
    <property type="chains" value="A=83-149"/>
</dbReference>
<dbReference type="PDB" id="1IQ5">
    <property type="method" value="X-ray"/>
    <property type="resolution" value="1.80 A"/>
    <property type="chains" value="A=1-149"/>
</dbReference>
<dbReference type="PDB" id="1MUX">
    <property type="method" value="NMR"/>
    <property type="chains" value="A=2-149"/>
</dbReference>
<dbReference type="PDB" id="1NWD">
    <property type="method" value="NMR"/>
    <property type="chains" value="A=2-149"/>
</dbReference>
<dbReference type="PDB" id="1SY9">
    <property type="method" value="NMR"/>
    <property type="chains" value="A=2-149"/>
</dbReference>
<dbReference type="PDB" id="1X02">
    <property type="method" value="NMR"/>
    <property type="chains" value="A=2-149"/>
</dbReference>
<dbReference type="PDB" id="1Y0V">
    <property type="method" value="X-ray"/>
    <property type="resolution" value="3.60 A"/>
    <property type="chains" value="H/I/J/K/L/M=6-149"/>
</dbReference>
<dbReference type="PDB" id="2COL">
    <property type="method" value="X-ray"/>
    <property type="resolution" value="2.20 A"/>
    <property type="chains" value="B=80-146"/>
</dbReference>
<dbReference type="PDB" id="2K3S">
    <property type="method" value="NMR"/>
    <property type="chains" value="B=83-149"/>
</dbReference>
<dbReference type="PDB" id="2KDU">
    <property type="method" value="NMR"/>
    <property type="chains" value="A=2-149"/>
</dbReference>
<dbReference type="PDB" id="2LLO">
    <property type="method" value="NMR"/>
    <property type="chains" value="A=2-81"/>
</dbReference>
<dbReference type="PDB" id="2LLQ">
    <property type="method" value="NMR"/>
    <property type="chains" value="A=83-149"/>
</dbReference>
<dbReference type="PDB" id="2MES">
    <property type="method" value="NMR"/>
    <property type="chains" value="A=2-149"/>
</dbReference>
<dbReference type="PDB" id="2RRT">
    <property type="method" value="NMR"/>
    <property type="chains" value="A=79-149"/>
</dbReference>
<dbReference type="PDB" id="4R8G">
    <property type="method" value="X-ray"/>
    <property type="resolution" value="3.50 A"/>
    <property type="chains" value="A/B/H=2-149"/>
</dbReference>
<dbReference type="PDB" id="5J7J">
    <property type="method" value="NMR"/>
    <property type="chains" value="A=2-149"/>
</dbReference>
<dbReference type="PDB" id="5T0X">
    <property type="method" value="NMR"/>
    <property type="chains" value="A=2-149"/>
</dbReference>
<dbReference type="PDB" id="6CTB">
    <property type="method" value="NMR"/>
    <property type="chains" value="A=3-149"/>
</dbReference>
<dbReference type="PDBsum" id="1CFC"/>
<dbReference type="PDBsum" id="1CFD"/>
<dbReference type="PDBsum" id="1CFF"/>
<dbReference type="PDBsum" id="1CKK"/>
<dbReference type="PDBsum" id="1DMO"/>
<dbReference type="PDBsum" id="1F70"/>
<dbReference type="PDBsum" id="1F71"/>
<dbReference type="PDBsum" id="1IQ5"/>
<dbReference type="PDBsum" id="1MUX"/>
<dbReference type="PDBsum" id="1NWD"/>
<dbReference type="PDBsum" id="1SY9"/>
<dbReference type="PDBsum" id="1X02"/>
<dbReference type="PDBsum" id="1Y0V"/>
<dbReference type="PDBsum" id="2COL"/>
<dbReference type="PDBsum" id="2K3S"/>
<dbReference type="PDBsum" id="2KDU"/>
<dbReference type="PDBsum" id="2LLO"/>
<dbReference type="PDBsum" id="2LLQ"/>
<dbReference type="PDBsum" id="2MES"/>
<dbReference type="PDBsum" id="2RRT"/>
<dbReference type="PDBsum" id="4R8G"/>
<dbReference type="PDBsum" id="5J7J"/>
<dbReference type="PDBsum" id="5T0X"/>
<dbReference type="PDBsum" id="6CTB"/>
<dbReference type="SASBDB" id="P0DP33"/>
<dbReference type="SMR" id="P0DP33"/>
<dbReference type="DNASU" id="108698710"/>
<dbReference type="DNASU" id="380558"/>
<dbReference type="DNASU" id="399259"/>
<dbReference type="DNASU" id="606721"/>
<dbReference type="GeneID" id="380558"/>
<dbReference type="GeneID" id="399259"/>
<dbReference type="GeneID" id="606721"/>
<dbReference type="KEGG" id="xla:108698710"/>
<dbReference type="KEGG" id="xla:380558"/>
<dbReference type="KEGG" id="xla:399259"/>
<dbReference type="KEGG" id="xla:606721"/>
<dbReference type="CTD" id="108698710"/>
<dbReference type="CTD" id="380558"/>
<dbReference type="CTD" id="399259"/>
<dbReference type="CTD" id="606721"/>
<dbReference type="OrthoDB" id="9924840at2759"/>
<dbReference type="EvolutionaryTrace" id="P0DP33"/>
<dbReference type="Proteomes" id="UP000186698">
    <property type="component" value="Chromosome 5L"/>
</dbReference>
<dbReference type="Proteomes" id="UP000186698">
    <property type="component" value="Chromosome 5S"/>
</dbReference>
<dbReference type="Proteomes" id="UP000186698">
    <property type="component" value="Chromosome 8L"/>
</dbReference>
<dbReference type="Proteomes" id="UP000186698">
    <property type="component" value="Chromosome 8S"/>
</dbReference>
<dbReference type="Bgee" id="108698710">
    <property type="expression patterns" value="Expressed in brain and 19 other cell types or tissues"/>
</dbReference>
<dbReference type="GO" id="GO:0016460">
    <property type="term" value="C:myosin II complex"/>
    <property type="evidence" value="ECO:0000318"/>
    <property type="project" value="GO_Central"/>
</dbReference>
<dbReference type="GO" id="GO:0005509">
    <property type="term" value="F:calcium ion binding"/>
    <property type="evidence" value="ECO:0007669"/>
    <property type="project" value="InterPro"/>
</dbReference>
<dbReference type="GO" id="GO:0005102">
    <property type="term" value="F:signaling receptor binding"/>
    <property type="evidence" value="ECO:0000353"/>
    <property type="project" value="BHF-UCL"/>
</dbReference>
<dbReference type="CDD" id="cd00051">
    <property type="entry name" value="EFh"/>
    <property type="match status" value="2"/>
</dbReference>
<dbReference type="FunFam" id="1.10.238.10:FF:000527">
    <property type="entry name" value="Calmodulin-3"/>
    <property type="match status" value="1"/>
</dbReference>
<dbReference type="Gene3D" id="1.10.238.10">
    <property type="entry name" value="EF-hand"/>
    <property type="match status" value="3"/>
</dbReference>
<dbReference type="IDEAL" id="IID50309"/>
<dbReference type="InterPro" id="IPR050230">
    <property type="entry name" value="CALM/Myosin/TropC-like"/>
</dbReference>
<dbReference type="InterPro" id="IPR011992">
    <property type="entry name" value="EF-hand-dom_pair"/>
</dbReference>
<dbReference type="InterPro" id="IPR018247">
    <property type="entry name" value="EF_Hand_1_Ca_BS"/>
</dbReference>
<dbReference type="InterPro" id="IPR002048">
    <property type="entry name" value="EF_hand_dom"/>
</dbReference>
<dbReference type="PANTHER" id="PTHR23048:SF0">
    <property type="entry name" value="CALMODULIN LIKE 3"/>
    <property type="match status" value="1"/>
</dbReference>
<dbReference type="PANTHER" id="PTHR23048">
    <property type="entry name" value="MYOSIN LIGHT CHAIN 1, 3"/>
    <property type="match status" value="1"/>
</dbReference>
<dbReference type="Pfam" id="PF13499">
    <property type="entry name" value="EF-hand_7"/>
    <property type="match status" value="2"/>
</dbReference>
<dbReference type="PRINTS" id="PR00450">
    <property type="entry name" value="RECOVERIN"/>
</dbReference>
<dbReference type="SMART" id="SM00054">
    <property type="entry name" value="EFh"/>
    <property type="match status" value="4"/>
</dbReference>
<dbReference type="SUPFAM" id="SSF47473">
    <property type="entry name" value="EF-hand"/>
    <property type="match status" value="1"/>
</dbReference>
<dbReference type="PROSITE" id="PS00018">
    <property type="entry name" value="EF_HAND_1"/>
    <property type="match status" value="4"/>
</dbReference>
<dbReference type="PROSITE" id="PS50222">
    <property type="entry name" value="EF_HAND_2"/>
    <property type="match status" value="4"/>
</dbReference>
<organism>
    <name type="scientific">Xenopus laevis</name>
    <name type="common">African clawed frog</name>
    <dbReference type="NCBI Taxonomy" id="8355"/>
    <lineage>
        <taxon>Eukaryota</taxon>
        <taxon>Metazoa</taxon>
        <taxon>Chordata</taxon>
        <taxon>Craniata</taxon>
        <taxon>Vertebrata</taxon>
        <taxon>Euteleostomi</taxon>
        <taxon>Amphibia</taxon>
        <taxon>Batrachia</taxon>
        <taxon>Anura</taxon>
        <taxon>Pipoidea</taxon>
        <taxon>Pipidae</taxon>
        <taxon>Xenopodinae</taxon>
        <taxon>Xenopus</taxon>
        <taxon>Xenopus</taxon>
    </lineage>
</organism>